<comment type="function">
    <text evidence="1">Catalyzes the isomerization between 2-isopropylmalate and 3-isopropylmalate, via the formation of 2-isopropylmaleate.</text>
</comment>
<comment type="catalytic activity">
    <reaction evidence="1">
        <text>(2R,3S)-3-isopropylmalate = (2S)-2-isopropylmalate</text>
        <dbReference type="Rhea" id="RHEA:32287"/>
        <dbReference type="ChEBI" id="CHEBI:1178"/>
        <dbReference type="ChEBI" id="CHEBI:35121"/>
        <dbReference type="EC" id="4.2.1.33"/>
    </reaction>
</comment>
<comment type="pathway">
    <text evidence="1">Amino-acid biosynthesis; L-leucine biosynthesis; L-leucine from 3-methyl-2-oxobutanoate: step 2/4.</text>
</comment>
<comment type="subunit">
    <text evidence="1">Heterodimer of LeuC and LeuD.</text>
</comment>
<comment type="similarity">
    <text evidence="1">Belongs to the LeuD family. LeuD type 1 subfamily.</text>
</comment>
<evidence type="ECO:0000255" key="1">
    <source>
        <dbReference type="HAMAP-Rule" id="MF_01031"/>
    </source>
</evidence>
<reference key="1">
    <citation type="submission" date="2006-03" db="EMBL/GenBank/DDBJ databases">
        <title>Complete sequence of Methylobacillus flagellatus KT.</title>
        <authorList>
            <consortium name="US DOE Joint Genome Institute"/>
            <person name="Copeland A."/>
            <person name="Lucas S."/>
            <person name="Lapidus A."/>
            <person name="Barry K."/>
            <person name="Detter J.C."/>
            <person name="Glavina del Rio T."/>
            <person name="Hammon N."/>
            <person name="Israni S."/>
            <person name="Dalin E."/>
            <person name="Tice H."/>
            <person name="Pitluck S."/>
            <person name="Brettin T."/>
            <person name="Bruce D."/>
            <person name="Han C."/>
            <person name="Tapia R."/>
            <person name="Saunders E."/>
            <person name="Gilna P."/>
            <person name="Schmutz J."/>
            <person name="Larimer F."/>
            <person name="Land M."/>
            <person name="Kyrpides N."/>
            <person name="Anderson I."/>
            <person name="Richardson P."/>
        </authorList>
    </citation>
    <scope>NUCLEOTIDE SEQUENCE [LARGE SCALE GENOMIC DNA]</scope>
    <source>
        <strain>ATCC 51484 / DSM 6875 / VKM B-1610 / KT</strain>
    </source>
</reference>
<protein>
    <recommendedName>
        <fullName evidence="1">3-isopropylmalate dehydratase small subunit</fullName>
        <ecNumber evidence="1">4.2.1.33</ecNumber>
    </recommendedName>
    <alternativeName>
        <fullName evidence="1">Alpha-IPM isomerase</fullName>
        <shortName evidence="1">IPMI</shortName>
    </alternativeName>
    <alternativeName>
        <fullName evidence="1">Isopropylmalate isomerase</fullName>
    </alternativeName>
</protein>
<dbReference type="EC" id="4.2.1.33" evidence="1"/>
<dbReference type="EMBL" id="CP000284">
    <property type="protein sequence ID" value="ABE49972.1"/>
    <property type="molecule type" value="Genomic_DNA"/>
</dbReference>
<dbReference type="RefSeq" id="WP_011479926.1">
    <property type="nucleotide sequence ID" value="NC_007947.1"/>
</dbReference>
<dbReference type="SMR" id="Q1H0L5"/>
<dbReference type="STRING" id="265072.Mfla_1704"/>
<dbReference type="KEGG" id="mfa:Mfla_1704"/>
<dbReference type="eggNOG" id="COG0066">
    <property type="taxonomic scope" value="Bacteria"/>
</dbReference>
<dbReference type="HOGENOM" id="CLU_081378_0_3_4"/>
<dbReference type="OrthoDB" id="9777465at2"/>
<dbReference type="UniPathway" id="UPA00048">
    <property type="reaction ID" value="UER00071"/>
</dbReference>
<dbReference type="Proteomes" id="UP000002440">
    <property type="component" value="Chromosome"/>
</dbReference>
<dbReference type="GO" id="GO:0009316">
    <property type="term" value="C:3-isopropylmalate dehydratase complex"/>
    <property type="evidence" value="ECO:0007669"/>
    <property type="project" value="InterPro"/>
</dbReference>
<dbReference type="GO" id="GO:0003861">
    <property type="term" value="F:3-isopropylmalate dehydratase activity"/>
    <property type="evidence" value="ECO:0007669"/>
    <property type="project" value="UniProtKB-UniRule"/>
</dbReference>
<dbReference type="GO" id="GO:0009098">
    <property type="term" value="P:L-leucine biosynthetic process"/>
    <property type="evidence" value="ECO:0007669"/>
    <property type="project" value="UniProtKB-UniRule"/>
</dbReference>
<dbReference type="CDD" id="cd01577">
    <property type="entry name" value="IPMI_Swivel"/>
    <property type="match status" value="1"/>
</dbReference>
<dbReference type="FunFam" id="3.20.19.10:FF:000003">
    <property type="entry name" value="3-isopropylmalate dehydratase small subunit"/>
    <property type="match status" value="1"/>
</dbReference>
<dbReference type="Gene3D" id="3.20.19.10">
    <property type="entry name" value="Aconitase, domain 4"/>
    <property type="match status" value="1"/>
</dbReference>
<dbReference type="HAMAP" id="MF_01031">
    <property type="entry name" value="LeuD_type1"/>
    <property type="match status" value="1"/>
</dbReference>
<dbReference type="InterPro" id="IPR004431">
    <property type="entry name" value="3-IsopropMal_deHydase_ssu"/>
</dbReference>
<dbReference type="InterPro" id="IPR015928">
    <property type="entry name" value="Aconitase/3IPM_dehydase_swvl"/>
</dbReference>
<dbReference type="InterPro" id="IPR000573">
    <property type="entry name" value="AconitaseA/IPMdHydase_ssu_swvl"/>
</dbReference>
<dbReference type="InterPro" id="IPR033940">
    <property type="entry name" value="IPMI_Swivel"/>
</dbReference>
<dbReference type="InterPro" id="IPR050075">
    <property type="entry name" value="LeuD"/>
</dbReference>
<dbReference type="NCBIfam" id="TIGR00171">
    <property type="entry name" value="leuD"/>
    <property type="match status" value="1"/>
</dbReference>
<dbReference type="NCBIfam" id="NF002458">
    <property type="entry name" value="PRK01641.1"/>
    <property type="match status" value="1"/>
</dbReference>
<dbReference type="PANTHER" id="PTHR43345:SF5">
    <property type="entry name" value="3-ISOPROPYLMALATE DEHYDRATASE SMALL SUBUNIT"/>
    <property type="match status" value="1"/>
</dbReference>
<dbReference type="PANTHER" id="PTHR43345">
    <property type="entry name" value="3-ISOPROPYLMALATE DEHYDRATASE SMALL SUBUNIT 2-RELATED-RELATED"/>
    <property type="match status" value="1"/>
</dbReference>
<dbReference type="Pfam" id="PF00694">
    <property type="entry name" value="Aconitase_C"/>
    <property type="match status" value="1"/>
</dbReference>
<dbReference type="SUPFAM" id="SSF52016">
    <property type="entry name" value="LeuD/IlvD-like"/>
    <property type="match status" value="1"/>
</dbReference>
<name>LEUD_METFK</name>
<organism>
    <name type="scientific">Methylobacillus flagellatus (strain ATCC 51484 / DSM 6875 / VKM B-1610 / KT)</name>
    <dbReference type="NCBI Taxonomy" id="265072"/>
    <lineage>
        <taxon>Bacteria</taxon>
        <taxon>Pseudomonadati</taxon>
        <taxon>Pseudomonadota</taxon>
        <taxon>Betaproteobacteria</taxon>
        <taxon>Nitrosomonadales</taxon>
        <taxon>Methylophilaceae</taxon>
        <taxon>Methylobacillus</taxon>
    </lineage>
</organism>
<proteinExistence type="inferred from homology"/>
<gene>
    <name evidence="1" type="primary">leuD</name>
    <name type="ordered locus">Mfla_1704</name>
</gene>
<keyword id="KW-0028">Amino-acid biosynthesis</keyword>
<keyword id="KW-0100">Branched-chain amino acid biosynthesis</keyword>
<keyword id="KW-0432">Leucine biosynthesis</keyword>
<keyword id="KW-0456">Lyase</keyword>
<keyword id="KW-1185">Reference proteome</keyword>
<sequence>MQAFTQLNGLVAPLDRANVDTDAIIPKQFLKSIKRAGFGPNAFDEWRYLDQGEPGKDNSKRPLNPDFPLNFPRYQGASILLTRENFGCGSSREHAPWALLDYGFRAIIAPSFADIFFNNCFKNGILPIVLDAEIVDSLFKEVEANEGYHLLVDLQSQIVQTPGGRHYAFEIDPFRKHCLLNGLDDIGLTLQHVDEIKAFEARHKAAQPWLFNES</sequence>
<accession>Q1H0L5</accession>
<feature type="chain" id="PRO_1000063785" description="3-isopropylmalate dehydratase small subunit">
    <location>
        <begin position="1"/>
        <end position="214"/>
    </location>
</feature>